<evidence type="ECO:0000269" key="1">
    <source>
    </source>
</evidence>
<evidence type="ECO:0000269" key="2">
    <source>
    </source>
</evidence>
<evidence type="ECO:0000305" key="3"/>
<proteinExistence type="evidence at transcript level"/>
<name>PG115_VACCW</name>
<protein>
    <recommendedName>
        <fullName>Core protein OPG115</fullName>
    </recommendedName>
    <alternativeName>
        <fullName>27 kDa virion core protein</fullName>
    </alternativeName>
</protein>
<reference key="1">
    <citation type="journal article" date="1986" name="Virology">
        <title>Nucleotide sequence and genetic map of the 16-kb vaccinia virus HindIII D fragment.</title>
        <authorList>
            <person name="Niles E.G."/>
            <person name="Condit R.C."/>
            <person name="Caro P."/>
            <person name="Davidson K."/>
            <person name="Matusick L."/>
            <person name="Seto J."/>
        </authorList>
    </citation>
    <scope>NUCLEOTIDE SEQUENCE [GENOMIC DNA]</scope>
</reference>
<reference key="2">
    <citation type="submission" date="2003-02" db="EMBL/GenBank/DDBJ databases">
        <title>Sequencing of the coding region of Vaccinia-WR to an average 9-fold redundancy and an error rate of 0.16/10kb.</title>
        <authorList>
            <person name="Esposito J.J."/>
            <person name="Frace A.M."/>
            <person name="Sammons S.A."/>
            <person name="Olsen-Rasmussen M."/>
            <person name="Osborne J."/>
            <person name="Wohlhueter R."/>
        </authorList>
    </citation>
    <scope>NUCLEOTIDE SEQUENCE [LARGE SCALE GENOMIC DNA]</scope>
</reference>
<reference key="3">
    <citation type="journal article" date="1991" name="Virology">
        <title>Genetic and biochemical characterization of vaccinia virus genes D2L and D3R which encode virion structural proteins.</title>
        <authorList>
            <person name="Dyster L.M."/>
            <person name="Niles E.G."/>
        </authorList>
    </citation>
    <scope>INDUCTION</scope>
    <scope>SUBCELLULAR LOCATION</scope>
</reference>
<reference key="4">
    <citation type="journal article" date="2004" name="Virology">
        <title>A complex of seven vaccinia virus proteins conserved in all chordopoxviruses is required for the association of membranes and viroplasm to form immature virions.</title>
        <authorList>
            <person name="Szajner P."/>
            <person name="Jaffe H."/>
            <person name="Weisberg A.S."/>
            <person name="Moss B."/>
        </authorList>
    </citation>
    <scope>IDENTIFICATION IN COMPLEX WITH OPG054; OPG092; OPG100; OPG114; OPG142 AND OPG157</scope>
    <scope>FUNCTION</scope>
</reference>
<sequence>MDIFIVKDNKYPKVDNDDNEVFILLGNHNDFIRLKLTKLKEHVFFSEYIVTPDTYGSLCVELNGSSFQHGGRYIEVEEFIDAGRQVRWCSTSNHISKDIPEDMHTDKFVIYDIYTFDAFKNKRLVFVQVPPSLGDDSHLTNPLLSPYYRNSVARQMVNDMIFNQDSFLKYLLEHLIRSHYRVSKHITIVRYKDTEELNLTRICYNRDKFKAFVFAWFNGVSENEKVLDTYKKVSNLI</sequence>
<keyword id="KW-0426">Late protein</keyword>
<keyword id="KW-1185">Reference proteome</keyword>
<keyword id="KW-0946">Virion</keyword>
<gene>
    <name type="primary">OPG115</name>
    <name type="ordered locus">VACWR108</name>
    <name type="ORF">D3R</name>
</gene>
<accession>P04302</accession>
<accession>Q76ZS4</accession>
<feature type="chain" id="PRO_0000099430" description="Core protein OPG115">
    <location>
        <begin position="1"/>
        <end position="237"/>
    </location>
</feature>
<comment type="function">
    <text evidence="1">Late protein which is part of a large complex required for early virion morphogenesis. This complex participates in the formation of virosomes and the incorporation of virosomal contents into nascent immature virions.</text>
</comment>
<comment type="subunit">
    <text evidence="1">Part of a complex composed of the kinase OPG054, OPG092, OPG100, OPG114, OPG115, OPG142 and OPG157.</text>
</comment>
<comment type="subcellular location">
    <subcellularLocation>
        <location evidence="2">Virion</location>
    </subcellularLocation>
    <text>Localizes to the virion core.</text>
</comment>
<comment type="induction">
    <text evidence="2">Expressed in the late phase of the viral replicative cycle.</text>
</comment>
<comment type="similarity">
    <text evidence="3">Belongs to the orthopoxvirus OPG115 family.</text>
</comment>
<dbReference type="EMBL" id="M15058">
    <property type="protein sequence ID" value="AAA48257.1"/>
    <property type="molecule type" value="Genomic_DNA"/>
</dbReference>
<dbReference type="EMBL" id="AY243312">
    <property type="protein sequence ID" value="AAO89387.1"/>
    <property type="molecule type" value="Genomic_DNA"/>
</dbReference>
<dbReference type="PIR" id="A03876">
    <property type="entry name" value="QQVZ5"/>
</dbReference>
<dbReference type="RefSeq" id="YP_232990.1">
    <property type="nucleotide sequence ID" value="NC_006998.1"/>
</dbReference>
<dbReference type="DNASU" id="3707564"/>
<dbReference type="GeneID" id="3707564"/>
<dbReference type="KEGG" id="vg:3707564"/>
<dbReference type="Proteomes" id="UP000000344">
    <property type="component" value="Genome"/>
</dbReference>
<dbReference type="GO" id="GO:0044423">
    <property type="term" value="C:virion component"/>
    <property type="evidence" value="ECO:0007669"/>
    <property type="project" value="UniProtKB-KW"/>
</dbReference>
<dbReference type="InterPro" id="IPR007660">
    <property type="entry name" value="Poxvirus_D3"/>
</dbReference>
<dbReference type="Pfam" id="PF04580">
    <property type="entry name" value="Pox_D3"/>
    <property type="match status" value="1"/>
</dbReference>
<organism>
    <name type="scientific">Vaccinia virus (strain Western Reserve)</name>
    <name type="common">VACV</name>
    <name type="synonym">Vaccinia virus (strain WR)</name>
    <dbReference type="NCBI Taxonomy" id="10254"/>
    <lineage>
        <taxon>Viruses</taxon>
        <taxon>Varidnaviria</taxon>
        <taxon>Bamfordvirae</taxon>
        <taxon>Nucleocytoviricota</taxon>
        <taxon>Pokkesviricetes</taxon>
        <taxon>Chitovirales</taxon>
        <taxon>Poxviridae</taxon>
        <taxon>Chordopoxvirinae</taxon>
        <taxon>Orthopoxvirus</taxon>
        <taxon>Vaccinia virus</taxon>
    </lineage>
</organism>
<organismHost>
    <name type="scientific">Bos taurus</name>
    <name type="common">Bovine</name>
    <dbReference type="NCBI Taxonomy" id="9913"/>
</organismHost>